<proteinExistence type="inferred from homology"/>
<reference key="1">
    <citation type="journal article" date="2006" name="Nat. Biotechnol.">
        <title>Complete genome sequence of the entomopathogenic and metabolically versatile soil bacterium Pseudomonas entomophila.</title>
        <authorList>
            <person name="Vodovar N."/>
            <person name="Vallenet D."/>
            <person name="Cruveiller S."/>
            <person name="Rouy Z."/>
            <person name="Barbe V."/>
            <person name="Acosta C."/>
            <person name="Cattolico L."/>
            <person name="Jubin C."/>
            <person name="Lajus A."/>
            <person name="Segurens B."/>
            <person name="Vacherie B."/>
            <person name="Wincker P."/>
            <person name="Weissenbach J."/>
            <person name="Lemaitre B."/>
            <person name="Medigue C."/>
            <person name="Boccard F."/>
        </authorList>
    </citation>
    <scope>NUCLEOTIDE SEQUENCE [LARGE SCALE GENOMIC DNA]</scope>
    <source>
        <strain>L48</strain>
    </source>
</reference>
<evidence type="ECO:0000255" key="1">
    <source>
        <dbReference type="HAMAP-Rule" id="MF_01023"/>
    </source>
</evidence>
<sequence>MSRFWSPFVKDLVPYVPGEQPKLARLVKLNTNENPYGPSPKALEAMQGELNDNLRLYPDPNSDRLKQAVAEYYGVTPAQVFVGNGSDEVLAHIFHGLFQHDRGPLLFPDVSYSFYPVYCGLYGIAFEQVELDEQFQIQVSDYSKPNAGIIFPNPNAPTGCLLPLEAVEQLLQANRDSVVVVDEAYIDFGGETAISLVDRYDNLLVTQTLSKSRSLAGLRVGLAVGHPDLIEALERIKNSFNSYPLDRMAIVGAAVAFEDREYFDETCRKVIDSREVLVEALTARGFEVLPSAANFIFARHPSQDAAGIAARLREQGVIVRHFKQGRIAQFLRITIGTPEMNQALLDAL</sequence>
<name>HIS8_PSEE4</name>
<dbReference type="EC" id="2.6.1.9" evidence="1"/>
<dbReference type="EMBL" id="CT573326">
    <property type="protein sequence ID" value="CAK14008.1"/>
    <property type="molecule type" value="Genomic_DNA"/>
</dbReference>
<dbReference type="RefSeq" id="WP_011532431.1">
    <property type="nucleotide sequence ID" value="NC_008027.1"/>
</dbReference>
<dbReference type="SMR" id="Q1IE97"/>
<dbReference type="STRING" id="384676.PSEEN1108"/>
<dbReference type="GeneID" id="32804399"/>
<dbReference type="KEGG" id="pen:PSEEN1108"/>
<dbReference type="eggNOG" id="COG0079">
    <property type="taxonomic scope" value="Bacteria"/>
</dbReference>
<dbReference type="HOGENOM" id="CLU_017584_3_0_6"/>
<dbReference type="OrthoDB" id="9809616at2"/>
<dbReference type="UniPathway" id="UPA00031">
    <property type="reaction ID" value="UER00012"/>
</dbReference>
<dbReference type="Proteomes" id="UP000000658">
    <property type="component" value="Chromosome"/>
</dbReference>
<dbReference type="GO" id="GO:0004400">
    <property type="term" value="F:histidinol-phosphate transaminase activity"/>
    <property type="evidence" value="ECO:0007669"/>
    <property type="project" value="UniProtKB-UniRule"/>
</dbReference>
<dbReference type="GO" id="GO:0030170">
    <property type="term" value="F:pyridoxal phosphate binding"/>
    <property type="evidence" value="ECO:0007669"/>
    <property type="project" value="InterPro"/>
</dbReference>
<dbReference type="GO" id="GO:0000105">
    <property type="term" value="P:L-histidine biosynthetic process"/>
    <property type="evidence" value="ECO:0007669"/>
    <property type="project" value="UniProtKB-UniRule"/>
</dbReference>
<dbReference type="CDD" id="cd00609">
    <property type="entry name" value="AAT_like"/>
    <property type="match status" value="1"/>
</dbReference>
<dbReference type="Gene3D" id="3.90.1150.10">
    <property type="entry name" value="Aspartate Aminotransferase, domain 1"/>
    <property type="match status" value="1"/>
</dbReference>
<dbReference type="Gene3D" id="3.40.640.10">
    <property type="entry name" value="Type I PLP-dependent aspartate aminotransferase-like (Major domain)"/>
    <property type="match status" value="1"/>
</dbReference>
<dbReference type="HAMAP" id="MF_01023">
    <property type="entry name" value="HisC_aminotrans_2"/>
    <property type="match status" value="1"/>
</dbReference>
<dbReference type="InterPro" id="IPR001917">
    <property type="entry name" value="Aminotrans_II_pyridoxalP_BS"/>
</dbReference>
<dbReference type="InterPro" id="IPR004839">
    <property type="entry name" value="Aminotransferase_I/II_large"/>
</dbReference>
<dbReference type="InterPro" id="IPR005861">
    <property type="entry name" value="HisP_aminotrans"/>
</dbReference>
<dbReference type="InterPro" id="IPR050106">
    <property type="entry name" value="HistidinolP_aminotransfase"/>
</dbReference>
<dbReference type="InterPro" id="IPR015424">
    <property type="entry name" value="PyrdxlP-dep_Trfase"/>
</dbReference>
<dbReference type="InterPro" id="IPR015421">
    <property type="entry name" value="PyrdxlP-dep_Trfase_major"/>
</dbReference>
<dbReference type="InterPro" id="IPR015422">
    <property type="entry name" value="PyrdxlP-dep_Trfase_small"/>
</dbReference>
<dbReference type="NCBIfam" id="TIGR01141">
    <property type="entry name" value="hisC"/>
    <property type="match status" value="1"/>
</dbReference>
<dbReference type="PANTHER" id="PTHR43643:SF3">
    <property type="entry name" value="HISTIDINOL-PHOSPHATE AMINOTRANSFERASE"/>
    <property type="match status" value="1"/>
</dbReference>
<dbReference type="PANTHER" id="PTHR43643">
    <property type="entry name" value="HISTIDINOL-PHOSPHATE AMINOTRANSFERASE 2"/>
    <property type="match status" value="1"/>
</dbReference>
<dbReference type="Pfam" id="PF00155">
    <property type="entry name" value="Aminotran_1_2"/>
    <property type="match status" value="1"/>
</dbReference>
<dbReference type="SUPFAM" id="SSF53383">
    <property type="entry name" value="PLP-dependent transferases"/>
    <property type="match status" value="1"/>
</dbReference>
<dbReference type="PROSITE" id="PS00599">
    <property type="entry name" value="AA_TRANSFER_CLASS_2"/>
    <property type="match status" value="1"/>
</dbReference>
<comment type="catalytic activity">
    <reaction evidence="1">
        <text>L-histidinol phosphate + 2-oxoglutarate = 3-(imidazol-4-yl)-2-oxopropyl phosphate + L-glutamate</text>
        <dbReference type="Rhea" id="RHEA:23744"/>
        <dbReference type="ChEBI" id="CHEBI:16810"/>
        <dbReference type="ChEBI" id="CHEBI:29985"/>
        <dbReference type="ChEBI" id="CHEBI:57766"/>
        <dbReference type="ChEBI" id="CHEBI:57980"/>
        <dbReference type="EC" id="2.6.1.9"/>
    </reaction>
</comment>
<comment type="cofactor">
    <cofactor evidence="1">
        <name>pyridoxal 5'-phosphate</name>
        <dbReference type="ChEBI" id="CHEBI:597326"/>
    </cofactor>
</comment>
<comment type="pathway">
    <text evidence="1">Amino-acid biosynthesis; L-histidine biosynthesis; L-histidine from 5-phospho-alpha-D-ribose 1-diphosphate: step 7/9.</text>
</comment>
<comment type="subunit">
    <text evidence="1">Homodimer.</text>
</comment>
<comment type="similarity">
    <text evidence="1">Belongs to the class-II pyridoxal-phosphate-dependent aminotransferase family. Histidinol-phosphate aminotransferase subfamily.</text>
</comment>
<keyword id="KW-0028">Amino-acid biosynthesis</keyword>
<keyword id="KW-0032">Aminotransferase</keyword>
<keyword id="KW-0368">Histidine biosynthesis</keyword>
<keyword id="KW-0663">Pyridoxal phosphate</keyword>
<keyword id="KW-0808">Transferase</keyword>
<protein>
    <recommendedName>
        <fullName evidence="1">Histidinol-phosphate aminotransferase</fullName>
        <ecNumber evidence="1">2.6.1.9</ecNumber>
    </recommendedName>
    <alternativeName>
        <fullName evidence="1">Imidazole acetol-phosphate transaminase</fullName>
    </alternativeName>
</protein>
<feature type="chain" id="PRO_1000063490" description="Histidinol-phosphate aminotransferase">
    <location>
        <begin position="1"/>
        <end position="348"/>
    </location>
</feature>
<feature type="modified residue" description="N6-(pyridoxal phosphate)lysine" evidence="1">
    <location>
        <position position="211"/>
    </location>
</feature>
<gene>
    <name evidence="1" type="primary">hisC</name>
    <name type="ordered locus">PSEEN1108</name>
</gene>
<organism>
    <name type="scientific">Pseudomonas entomophila (strain L48)</name>
    <dbReference type="NCBI Taxonomy" id="384676"/>
    <lineage>
        <taxon>Bacteria</taxon>
        <taxon>Pseudomonadati</taxon>
        <taxon>Pseudomonadota</taxon>
        <taxon>Gammaproteobacteria</taxon>
        <taxon>Pseudomonadales</taxon>
        <taxon>Pseudomonadaceae</taxon>
        <taxon>Pseudomonas</taxon>
    </lineage>
</organism>
<accession>Q1IE97</accession>